<reference key="1">
    <citation type="journal article" date="2000" name="J. Biol. Chem.">
        <title>A family of human RNA-binding proteins related to the Drosophila Bruno translational regulator.</title>
        <authorList>
            <person name="Good P.J."/>
            <person name="Chen Q."/>
            <person name="Warner S.J."/>
            <person name="Herring D.C."/>
        </authorList>
    </citation>
    <scope>NUCLEOTIDE SEQUENCE [MRNA] (ISOFORM 1)</scope>
    <scope>RNA-BINDING</scope>
    <scope>MUTAGENESIS OF PHE-105 AND PHE-194</scope>
    <source>
        <tissue>Head</tissue>
    </source>
</reference>
<reference key="2">
    <citation type="submission" date="2003-01" db="EMBL/GenBank/DDBJ databases">
        <authorList>
            <consortium name="NIH - Xenopus Gene Collection (XGC) project"/>
        </authorList>
    </citation>
    <scope>NUCLEOTIDE SEQUENCE [LARGE SCALE MRNA] (ISOFORM 2)</scope>
    <source>
        <tissue>Embryo</tissue>
    </source>
</reference>
<dbReference type="EMBL" id="AY052559">
    <property type="protein sequence ID" value="AAL14122.1"/>
    <property type="molecule type" value="mRNA"/>
</dbReference>
<dbReference type="EMBL" id="U69547">
    <property type="protein sequence ID" value="AAB09041.1"/>
    <property type="molecule type" value="mRNA"/>
</dbReference>
<dbReference type="EMBL" id="BC045035">
    <property type="protein sequence ID" value="AAH45035.1"/>
    <property type="molecule type" value="mRNA"/>
</dbReference>
<dbReference type="RefSeq" id="NP_001079593.1">
    <molecule id="Q7ZXE2-1"/>
    <property type="nucleotide sequence ID" value="NM_001086124.1"/>
</dbReference>
<dbReference type="RefSeq" id="NP_001165444.1">
    <molecule id="Q7ZXE2-2"/>
    <property type="nucleotide sequence ID" value="NM_001171973.1"/>
</dbReference>
<dbReference type="RefSeq" id="XP_018106118.1">
    <molecule id="Q7ZXE2-2"/>
    <property type="nucleotide sequence ID" value="XM_018250629.1"/>
</dbReference>
<dbReference type="BMRB" id="Q7ZXE2"/>
<dbReference type="SMR" id="Q7ZXE2"/>
<dbReference type="DNASU" id="379280"/>
<dbReference type="GeneID" id="379280"/>
<dbReference type="KEGG" id="xla:379280"/>
<dbReference type="AGR" id="Xenbase:XB-GENE-963644"/>
<dbReference type="CTD" id="379280"/>
<dbReference type="Xenbase" id="XB-GENE-963644">
    <property type="gene designation" value="celf2.L"/>
</dbReference>
<dbReference type="OrthoDB" id="410044at2759"/>
<dbReference type="Proteomes" id="UP000186698">
    <property type="component" value="Chromosome 3L"/>
</dbReference>
<dbReference type="Bgee" id="379280">
    <property type="expression patterns" value="Expressed in brain and 13 other cell types or tissues"/>
</dbReference>
<dbReference type="GO" id="GO:0005737">
    <property type="term" value="C:cytoplasm"/>
    <property type="evidence" value="ECO:0000318"/>
    <property type="project" value="GO_Central"/>
</dbReference>
<dbReference type="GO" id="GO:0005634">
    <property type="term" value="C:nucleus"/>
    <property type="evidence" value="ECO:0000318"/>
    <property type="project" value="GO_Central"/>
</dbReference>
<dbReference type="GO" id="GO:1990904">
    <property type="term" value="C:ribonucleoprotein complex"/>
    <property type="evidence" value="ECO:0000318"/>
    <property type="project" value="GO_Central"/>
</dbReference>
<dbReference type="GO" id="GO:0003730">
    <property type="term" value="F:mRNA 3'-UTR binding"/>
    <property type="evidence" value="ECO:0000318"/>
    <property type="project" value="GO_Central"/>
</dbReference>
<dbReference type="GO" id="GO:0006376">
    <property type="term" value="P:mRNA splice site recognition"/>
    <property type="evidence" value="ECO:0000318"/>
    <property type="project" value="GO_Central"/>
</dbReference>
<dbReference type="GO" id="GO:0000381">
    <property type="term" value="P:regulation of alternative mRNA splicing, via spliceosome"/>
    <property type="evidence" value="ECO:0000318"/>
    <property type="project" value="GO_Central"/>
</dbReference>
<dbReference type="CDD" id="cd12631">
    <property type="entry name" value="RRM1_CELF1_2_Bruno"/>
    <property type="match status" value="1"/>
</dbReference>
<dbReference type="CDD" id="cd12634">
    <property type="entry name" value="RRM2_CELF1_2"/>
    <property type="match status" value="1"/>
</dbReference>
<dbReference type="CDD" id="cd12638">
    <property type="entry name" value="RRM3_CELF1_2"/>
    <property type="match status" value="1"/>
</dbReference>
<dbReference type="FunFam" id="3.30.70.330:FF:000013">
    <property type="entry name" value="CUGBP Elav-like family member 1 isoform 2"/>
    <property type="match status" value="1"/>
</dbReference>
<dbReference type="FunFam" id="3.30.70.330:FF:000015">
    <property type="entry name" value="CUGBP Elav-like family member 1 isoform 2"/>
    <property type="match status" value="1"/>
</dbReference>
<dbReference type="FunFam" id="3.30.70.330:FF:000016">
    <property type="entry name" value="CUGBP Elav-like family member 1 isoform 2"/>
    <property type="match status" value="1"/>
</dbReference>
<dbReference type="Gene3D" id="3.30.70.330">
    <property type="match status" value="3"/>
</dbReference>
<dbReference type="InterPro" id="IPR034196">
    <property type="entry name" value="CELF1/2_RRM1"/>
</dbReference>
<dbReference type="InterPro" id="IPR034198">
    <property type="entry name" value="CELF1/2_RRM2"/>
</dbReference>
<dbReference type="InterPro" id="IPR034199">
    <property type="entry name" value="CELF1/2_RRM3"/>
</dbReference>
<dbReference type="InterPro" id="IPR012677">
    <property type="entry name" value="Nucleotide-bd_a/b_plait_sf"/>
</dbReference>
<dbReference type="InterPro" id="IPR035979">
    <property type="entry name" value="RBD_domain_sf"/>
</dbReference>
<dbReference type="InterPro" id="IPR000504">
    <property type="entry name" value="RRM_dom"/>
</dbReference>
<dbReference type="PANTHER" id="PTHR24012">
    <property type="entry name" value="RNA BINDING PROTEIN"/>
    <property type="match status" value="1"/>
</dbReference>
<dbReference type="Pfam" id="PF00076">
    <property type="entry name" value="RRM_1"/>
    <property type="match status" value="3"/>
</dbReference>
<dbReference type="SMART" id="SM00360">
    <property type="entry name" value="RRM"/>
    <property type="match status" value="3"/>
</dbReference>
<dbReference type="SUPFAM" id="SSF54928">
    <property type="entry name" value="RNA-binding domain, RBD"/>
    <property type="match status" value="2"/>
</dbReference>
<dbReference type="PROSITE" id="PS50102">
    <property type="entry name" value="RRM"/>
    <property type="match status" value="3"/>
</dbReference>
<comment type="function">
    <text evidence="1">RNA-binding protein implicated in the regulation of several post-transcriptional events. May be involved in pre-mRNA alternative splicing, mRNA translation repression and stability (By similarity).</text>
</comment>
<comment type="subcellular location">
    <subcellularLocation>
        <location evidence="2">Nucleus</location>
    </subcellularLocation>
    <subcellularLocation>
        <location evidence="3">Cytoplasm</location>
    </subcellularLocation>
</comment>
<comment type="alternative products">
    <event type="alternative splicing"/>
    <isoform>
        <id>Q7ZXE2-1</id>
        <name>1</name>
        <sequence type="displayed"/>
    </isoform>
    <isoform>
        <id>Q7ZXE2-2</id>
        <name>2</name>
        <sequence type="described" ref="VSP_026822 VSP_026823"/>
    </isoform>
</comment>
<comment type="similarity">
    <text evidence="7">Belongs to the CELF/BRUNOL family.</text>
</comment>
<protein>
    <recommendedName>
        <fullName>CUGBP Elav-like family member 2</fullName>
        <shortName>CELF-2</shortName>
    </recommendedName>
    <alternativeName>
        <fullName>Bruno-like protein 3</fullName>
    </alternativeName>
    <alternativeName>
        <fullName>CUG triplet repeat RNA-binding protein 2</fullName>
        <shortName>CUG-BP2</shortName>
    </alternativeName>
    <alternativeName>
        <fullName>CUG-BP- and ETR-3-like factor 2</fullName>
    </alternativeName>
    <alternativeName>
        <fullName>ELAV-type RNA-binding protein 3</fullName>
        <shortName>ETR-3</shortName>
    </alternativeName>
    <alternativeName>
        <fullName>RNA-binding protein BRUNOL-3</fullName>
    </alternativeName>
</protein>
<sequence length="536" mass="57429">MFERTSKPAFVENICVESMRCPKSAVTMRNEELLFSNGTTNKMNGALDHSDQPDPDAIKMFVGQIPRSWSEKELKDLFEPYGAVYQINVLRDRSQNPPQSKGCCFVTFYTRKAALEAQNALHNIKTLPGMHHPIQMKPADSEKSNAVEDRKLFIGMVSKKCNENDIRVMFSPFGQIEECRILRGPDGLSRGCAFVTFSTRAMAQNAIKAMHQSQTMEGCSSPIVVKFADTQKDKEQRRLQQQLAQQMQQLNTATWGNLTGLGGLTPQYLALLQQATTPSNLGAFSGIQQMAGMNALQLQNLATLAAAAAAAQTSATTTNVNPLSTTASALGALTSPVAASTANSSAGAAMNSLTSLGTLQGLAGATVGLNNINALAGTVNIAQMLSGMAALNGGLGATGLTNGTAGTMDALTQAYSGIQQYAAAALPTLYSQSLLQQQSAAGSQKEGPEGANLFIYHLPQEFGDQDILQMFMPFGNVISAKVFIDKQTNLSKCFGFVSYDNPVSAQAAIQAMNGFQIGMKRLKVQLKRSKNDSKPY</sequence>
<evidence type="ECO:0000250" key="1"/>
<evidence type="ECO:0000250" key="2">
    <source>
        <dbReference type="UniProtKB" id="O95319"/>
    </source>
</evidence>
<evidence type="ECO:0000250" key="3">
    <source>
        <dbReference type="UniProtKB" id="Q7T2T1"/>
    </source>
</evidence>
<evidence type="ECO:0000255" key="4">
    <source>
        <dbReference type="PROSITE-ProRule" id="PRU00176"/>
    </source>
</evidence>
<evidence type="ECO:0000269" key="5">
    <source>
    </source>
</evidence>
<evidence type="ECO:0000303" key="6">
    <source ref="2"/>
</evidence>
<evidence type="ECO:0000305" key="7"/>
<feature type="chain" id="PRO_0000295195" description="CUGBP Elav-like family member 2">
    <location>
        <begin position="1"/>
        <end position="536"/>
    </location>
</feature>
<feature type="domain" description="RRM 1" evidence="4">
    <location>
        <begin position="58"/>
        <end position="141"/>
    </location>
</feature>
<feature type="domain" description="RRM 2" evidence="4">
    <location>
        <begin position="150"/>
        <end position="230"/>
    </location>
</feature>
<feature type="domain" description="RRM 3" evidence="4">
    <location>
        <begin position="451"/>
        <end position="529"/>
    </location>
</feature>
<feature type="splice variant" id="VSP_026822" description="In isoform 2." evidence="6">
    <original>IAQMLSG</original>
    <variation>S</variation>
    <location>
        <begin position="381"/>
        <end position="387"/>
    </location>
</feature>
<feature type="splice variant" id="VSP_026823" description="In isoform 2." evidence="6">
    <original>E</original>
    <variation>EGLLFISAQ</variation>
    <location>
        <position position="446"/>
    </location>
</feature>
<feature type="mutagenesis site" description="Does not reduce RNA-binding. Strongly reduces RNA-binding; when associated with L-194." evidence="5">
    <original>F</original>
    <variation>L</variation>
    <location>
        <position position="105"/>
    </location>
</feature>
<feature type="mutagenesis site" description="Reduces slightly RNA-binding. Strongly reduces RNA-binding; when associated with L-105." evidence="5">
    <original>F</original>
    <variation>L</variation>
    <location>
        <position position="194"/>
    </location>
</feature>
<proteinExistence type="evidence at protein level"/>
<accession>Q7ZXE2</accession>
<accession>P70055</accession>
<accession>Q90WV9</accession>
<name>CELF2_XENLA</name>
<organism>
    <name type="scientific">Xenopus laevis</name>
    <name type="common">African clawed frog</name>
    <dbReference type="NCBI Taxonomy" id="8355"/>
    <lineage>
        <taxon>Eukaryota</taxon>
        <taxon>Metazoa</taxon>
        <taxon>Chordata</taxon>
        <taxon>Craniata</taxon>
        <taxon>Vertebrata</taxon>
        <taxon>Euteleostomi</taxon>
        <taxon>Amphibia</taxon>
        <taxon>Batrachia</taxon>
        <taxon>Anura</taxon>
        <taxon>Pipoidea</taxon>
        <taxon>Pipidae</taxon>
        <taxon>Xenopodinae</taxon>
        <taxon>Xenopus</taxon>
        <taxon>Xenopus</taxon>
    </lineage>
</organism>
<gene>
    <name type="primary">celf2</name>
    <name type="synonym">brunol3</name>
    <name type="synonym">cugbp2</name>
    <name type="synonym">etr3</name>
</gene>
<keyword id="KW-0025">Alternative splicing</keyword>
<keyword id="KW-0963">Cytoplasm</keyword>
<keyword id="KW-0507">mRNA processing</keyword>
<keyword id="KW-0539">Nucleus</keyword>
<keyword id="KW-1185">Reference proteome</keyword>
<keyword id="KW-0677">Repeat</keyword>
<keyword id="KW-0678">Repressor</keyword>
<keyword id="KW-0694">RNA-binding</keyword>